<keyword id="KW-0488">Methylation</keyword>
<keyword id="KW-0687">Ribonucleoprotein</keyword>
<keyword id="KW-0689">Ribosomal protein</keyword>
<keyword id="KW-0694">RNA-binding</keyword>
<keyword id="KW-0699">rRNA-binding</keyword>
<keyword id="KW-0820">tRNA-binding</keyword>
<evidence type="ECO:0000250" key="1"/>
<evidence type="ECO:0000255" key="2">
    <source>
        <dbReference type="HAMAP-Rule" id="MF_00403"/>
    </source>
</evidence>
<evidence type="ECO:0000305" key="3"/>
<reference key="1">
    <citation type="journal article" date="2005" name="J. Bacteriol.">
        <title>Completion of the genome sequence of Brucella abortus and comparison to the highly similar genomes of Brucella melitensis and Brucella suis.</title>
        <authorList>
            <person name="Halling S.M."/>
            <person name="Peterson-Burch B.D."/>
            <person name="Bricker B.J."/>
            <person name="Zuerner R.L."/>
            <person name="Qing Z."/>
            <person name="Li L.-L."/>
            <person name="Kapur V."/>
            <person name="Alt D.P."/>
            <person name="Olsen S.C."/>
        </authorList>
    </citation>
    <scope>NUCLEOTIDE SEQUENCE [LARGE SCALE GENOMIC DNA]</scope>
    <source>
        <strain>9-941</strain>
    </source>
</reference>
<protein>
    <recommendedName>
        <fullName evidence="2">Small ribosomal subunit protein uS12</fullName>
    </recommendedName>
    <alternativeName>
        <fullName evidence="3">30S ribosomal protein S12</fullName>
    </alternativeName>
</protein>
<comment type="function">
    <text evidence="2">With S4 and S5 plays an important role in translational accuracy.</text>
</comment>
<comment type="function">
    <text evidence="2">Interacts with and stabilizes bases of the 16S rRNA that are involved in tRNA selection in the A site and with the mRNA backbone. Located at the interface of the 30S and 50S subunits, it traverses the body of the 30S subunit contacting proteins on the other side and probably holding the rRNA structure together. The combined cluster of proteins S8, S12 and S17 appears to hold together the shoulder and platform of the 30S subunit.</text>
</comment>
<comment type="subunit">
    <text evidence="2">Part of the 30S ribosomal subunit. Contacts proteins S8 and S17. May interact with IF1 in the 30S initiation complex.</text>
</comment>
<comment type="similarity">
    <text evidence="2">Belongs to the universal ribosomal protein uS12 family.</text>
</comment>
<dbReference type="EMBL" id="AE017223">
    <property type="protein sequence ID" value="AAX74581.1"/>
    <property type="molecule type" value="Genomic_DNA"/>
</dbReference>
<dbReference type="RefSeq" id="WP_002964366.1">
    <property type="nucleotide sequence ID" value="NC_006932.1"/>
</dbReference>
<dbReference type="SMR" id="Q57CQ3"/>
<dbReference type="EnsemblBacteria" id="AAX74581">
    <property type="protein sequence ID" value="AAX74581"/>
    <property type="gene ID" value="BruAb1_1243"/>
</dbReference>
<dbReference type="GeneID" id="93016435"/>
<dbReference type="KEGG" id="bmb:BruAb1_1243"/>
<dbReference type="HOGENOM" id="CLU_104295_1_2_5"/>
<dbReference type="PRO" id="PR:Q57CQ3"/>
<dbReference type="Proteomes" id="UP000000540">
    <property type="component" value="Chromosome I"/>
</dbReference>
<dbReference type="GO" id="GO:0015935">
    <property type="term" value="C:small ribosomal subunit"/>
    <property type="evidence" value="ECO:0007669"/>
    <property type="project" value="InterPro"/>
</dbReference>
<dbReference type="GO" id="GO:0019843">
    <property type="term" value="F:rRNA binding"/>
    <property type="evidence" value="ECO:0007669"/>
    <property type="project" value="UniProtKB-UniRule"/>
</dbReference>
<dbReference type="GO" id="GO:0003735">
    <property type="term" value="F:structural constituent of ribosome"/>
    <property type="evidence" value="ECO:0007669"/>
    <property type="project" value="InterPro"/>
</dbReference>
<dbReference type="GO" id="GO:0000049">
    <property type="term" value="F:tRNA binding"/>
    <property type="evidence" value="ECO:0007669"/>
    <property type="project" value="UniProtKB-UniRule"/>
</dbReference>
<dbReference type="GO" id="GO:0006412">
    <property type="term" value="P:translation"/>
    <property type="evidence" value="ECO:0007669"/>
    <property type="project" value="UniProtKB-UniRule"/>
</dbReference>
<dbReference type="CDD" id="cd03368">
    <property type="entry name" value="Ribosomal_S12"/>
    <property type="match status" value="1"/>
</dbReference>
<dbReference type="FunFam" id="2.40.50.140:FF:000001">
    <property type="entry name" value="30S ribosomal protein S12"/>
    <property type="match status" value="1"/>
</dbReference>
<dbReference type="Gene3D" id="2.40.50.140">
    <property type="entry name" value="Nucleic acid-binding proteins"/>
    <property type="match status" value="1"/>
</dbReference>
<dbReference type="HAMAP" id="MF_00403_B">
    <property type="entry name" value="Ribosomal_uS12_B"/>
    <property type="match status" value="1"/>
</dbReference>
<dbReference type="InterPro" id="IPR012340">
    <property type="entry name" value="NA-bd_OB-fold"/>
</dbReference>
<dbReference type="InterPro" id="IPR006032">
    <property type="entry name" value="Ribosomal_uS12"/>
</dbReference>
<dbReference type="InterPro" id="IPR005679">
    <property type="entry name" value="Ribosomal_uS12_bac"/>
</dbReference>
<dbReference type="NCBIfam" id="TIGR00981">
    <property type="entry name" value="rpsL_bact"/>
    <property type="match status" value="1"/>
</dbReference>
<dbReference type="PANTHER" id="PTHR11652">
    <property type="entry name" value="30S RIBOSOMAL PROTEIN S12 FAMILY MEMBER"/>
    <property type="match status" value="1"/>
</dbReference>
<dbReference type="Pfam" id="PF00164">
    <property type="entry name" value="Ribosom_S12_S23"/>
    <property type="match status" value="1"/>
</dbReference>
<dbReference type="PIRSF" id="PIRSF002133">
    <property type="entry name" value="Ribosomal_S12/S23"/>
    <property type="match status" value="1"/>
</dbReference>
<dbReference type="PRINTS" id="PR01034">
    <property type="entry name" value="RIBOSOMALS12"/>
</dbReference>
<dbReference type="SUPFAM" id="SSF50249">
    <property type="entry name" value="Nucleic acid-binding proteins"/>
    <property type="match status" value="1"/>
</dbReference>
<dbReference type="PROSITE" id="PS00055">
    <property type="entry name" value="RIBOSOMAL_S12"/>
    <property type="match status" value="1"/>
</dbReference>
<sequence length="123" mass="13871">MPTVNQLIRKPRTAPVKRNKVPALQANPQKRGVCTRVYTTTPKKPNSALRKVAKVRLTNGFEVIGYIPGEGHNLQEHSVVMIRGGRVKDLPGVRYHIIRGVLDTQGVKNRKQRRSKYGAKRPK</sequence>
<accession>Q57CQ3</accession>
<gene>
    <name evidence="2" type="primary">rpsL</name>
    <name type="ordered locus">BruAb1_1243</name>
</gene>
<organism>
    <name type="scientific">Brucella abortus biovar 1 (strain 9-941)</name>
    <dbReference type="NCBI Taxonomy" id="262698"/>
    <lineage>
        <taxon>Bacteria</taxon>
        <taxon>Pseudomonadati</taxon>
        <taxon>Pseudomonadota</taxon>
        <taxon>Alphaproteobacteria</taxon>
        <taxon>Hyphomicrobiales</taxon>
        <taxon>Brucellaceae</taxon>
        <taxon>Brucella/Ochrobactrum group</taxon>
        <taxon>Brucella</taxon>
    </lineage>
</organism>
<name>RS12_BRUAB</name>
<feature type="chain" id="PRO_0000226377" description="Small ribosomal subunit protein uS12">
    <location>
        <begin position="1"/>
        <end position="123"/>
    </location>
</feature>
<feature type="modified residue" description="3-methylthioaspartic acid" evidence="1">
    <location>
        <position position="89"/>
    </location>
</feature>
<proteinExistence type="inferred from homology"/>